<keyword id="KW-0963">Cytoplasm</keyword>
<keyword id="KW-0240">DNA-directed RNA polymerase</keyword>
<keyword id="KW-0548">Nucleotidyltransferase</keyword>
<keyword id="KW-0804">Transcription</keyword>
<keyword id="KW-0808">Transferase</keyword>
<gene>
    <name evidence="1" type="primary">rpo6</name>
    <name evidence="1" type="synonym">rpoK</name>
    <name type="ordered locus">PYRAB05350</name>
    <name type="ORF">PAB7132</name>
</gene>
<name>RPO6_PYRAB</name>
<evidence type="ECO:0000255" key="1">
    <source>
        <dbReference type="HAMAP-Rule" id="MF_00192"/>
    </source>
</evidence>
<sequence>MFKYTRFEKARIIGARALQIAMGAPVLIDVPEGITPLEAAIMEFEKGVIPITVIRPS</sequence>
<organism>
    <name type="scientific">Pyrococcus abyssi (strain GE5 / Orsay)</name>
    <dbReference type="NCBI Taxonomy" id="272844"/>
    <lineage>
        <taxon>Archaea</taxon>
        <taxon>Methanobacteriati</taxon>
        <taxon>Methanobacteriota</taxon>
        <taxon>Thermococci</taxon>
        <taxon>Thermococcales</taxon>
        <taxon>Thermococcaceae</taxon>
        <taxon>Pyrococcus</taxon>
    </lineage>
</organism>
<protein>
    <recommendedName>
        <fullName evidence="1">DNA-directed RNA polymerase subunit Rpo6</fullName>
        <ecNumber evidence="1">2.7.7.6</ecNumber>
    </recommendedName>
    <alternativeName>
        <fullName evidence="1">DNA-directed RNA polymerase subunit K</fullName>
    </alternativeName>
</protein>
<proteinExistence type="inferred from homology"/>
<feature type="chain" id="PRO_0000133817" description="DNA-directed RNA polymerase subunit Rpo6">
    <location>
        <begin position="1"/>
        <end position="57"/>
    </location>
</feature>
<dbReference type="EC" id="2.7.7.6" evidence="1"/>
<dbReference type="EMBL" id="AJ248284">
    <property type="protein sequence ID" value="CAB49457.1"/>
    <property type="molecule type" value="Genomic_DNA"/>
</dbReference>
<dbReference type="EMBL" id="HE613800">
    <property type="protein sequence ID" value="CCE69924.1"/>
    <property type="molecule type" value="Genomic_DNA"/>
</dbReference>
<dbReference type="PIR" id="B75172">
    <property type="entry name" value="B75172"/>
</dbReference>
<dbReference type="RefSeq" id="WP_010867659.1">
    <property type="nucleotide sequence ID" value="NC_000868.1"/>
</dbReference>
<dbReference type="SMR" id="P62014"/>
<dbReference type="STRING" id="272844.PAB7132"/>
<dbReference type="KEGG" id="pab:PAB7132"/>
<dbReference type="PATRIC" id="fig|272844.11.peg.570"/>
<dbReference type="eggNOG" id="arCOG01268">
    <property type="taxonomic scope" value="Archaea"/>
</dbReference>
<dbReference type="HOGENOM" id="CLU_112527_5_0_2"/>
<dbReference type="OrthoDB" id="10567at2157"/>
<dbReference type="PhylomeDB" id="P62014"/>
<dbReference type="Proteomes" id="UP000000810">
    <property type="component" value="Chromosome"/>
</dbReference>
<dbReference type="Proteomes" id="UP000009139">
    <property type="component" value="Chromosome"/>
</dbReference>
<dbReference type="GO" id="GO:0005737">
    <property type="term" value="C:cytoplasm"/>
    <property type="evidence" value="ECO:0007669"/>
    <property type="project" value="UniProtKB-SubCell"/>
</dbReference>
<dbReference type="GO" id="GO:0000428">
    <property type="term" value="C:DNA-directed RNA polymerase complex"/>
    <property type="evidence" value="ECO:0007669"/>
    <property type="project" value="UniProtKB-KW"/>
</dbReference>
<dbReference type="GO" id="GO:0003677">
    <property type="term" value="F:DNA binding"/>
    <property type="evidence" value="ECO:0007669"/>
    <property type="project" value="UniProtKB-UniRule"/>
</dbReference>
<dbReference type="GO" id="GO:0003899">
    <property type="term" value="F:DNA-directed RNA polymerase activity"/>
    <property type="evidence" value="ECO:0007669"/>
    <property type="project" value="UniProtKB-UniRule"/>
</dbReference>
<dbReference type="GO" id="GO:0006360">
    <property type="term" value="P:transcription by RNA polymerase I"/>
    <property type="evidence" value="ECO:0007669"/>
    <property type="project" value="TreeGrafter"/>
</dbReference>
<dbReference type="GO" id="GO:0006366">
    <property type="term" value="P:transcription by RNA polymerase II"/>
    <property type="evidence" value="ECO:0007669"/>
    <property type="project" value="TreeGrafter"/>
</dbReference>
<dbReference type="GO" id="GO:0042797">
    <property type="term" value="P:tRNA transcription by RNA polymerase III"/>
    <property type="evidence" value="ECO:0007669"/>
    <property type="project" value="TreeGrafter"/>
</dbReference>
<dbReference type="Gene3D" id="3.90.940.10">
    <property type="match status" value="1"/>
</dbReference>
<dbReference type="HAMAP" id="MF_00192">
    <property type="entry name" value="RNApol_arch_Rpo6"/>
    <property type="match status" value="1"/>
</dbReference>
<dbReference type="InterPro" id="IPR020708">
    <property type="entry name" value="DNA-dir_RNA_polK_14-18kDa_CS"/>
</dbReference>
<dbReference type="InterPro" id="IPR006110">
    <property type="entry name" value="Pol_omega/Rpo6/RPB6"/>
</dbReference>
<dbReference type="InterPro" id="IPR036161">
    <property type="entry name" value="RPB6/omega-like_sf"/>
</dbReference>
<dbReference type="InterPro" id="IPR006111">
    <property type="entry name" value="Rpo6/Rpb6"/>
</dbReference>
<dbReference type="NCBIfam" id="NF002208">
    <property type="entry name" value="PRK01099.1-3"/>
    <property type="match status" value="1"/>
</dbReference>
<dbReference type="PANTHER" id="PTHR47227">
    <property type="entry name" value="DNA-DIRECTED RNA POLYMERASE SUBUNIT K"/>
    <property type="match status" value="1"/>
</dbReference>
<dbReference type="PANTHER" id="PTHR47227:SF5">
    <property type="entry name" value="DNA-DIRECTED RNA POLYMERASES I, II, AND III SUBUNIT RPABC2"/>
    <property type="match status" value="1"/>
</dbReference>
<dbReference type="Pfam" id="PF01192">
    <property type="entry name" value="RNA_pol_Rpb6"/>
    <property type="match status" value="1"/>
</dbReference>
<dbReference type="PIRSF" id="PIRSF000778">
    <property type="entry name" value="RpoK/RPB6"/>
    <property type="match status" value="1"/>
</dbReference>
<dbReference type="SUPFAM" id="SSF63562">
    <property type="entry name" value="RPB6/omega subunit-like"/>
    <property type="match status" value="1"/>
</dbReference>
<dbReference type="PROSITE" id="PS01111">
    <property type="entry name" value="RNA_POL_K_14KD"/>
    <property type="match status" value="1"/>
</dbReference>
<reference key="1">
    <citation type="journal article" date="2003" name="Mol. Microbiol.">
        <title>An integrated analysis of the genome of the hyperthermophilic archaeon Pyrococcus abyssi.</title>
        <authorList>
            <person name="Cohen G.N."/>
            <person name="Barbe V."/>
            <person name="Flament D."/>
            <person name="Galperin M."/>
            <person name="Heilig R."/>
            <person name="Lecompte O."/>
            <person name="Poch O."/>
            <person name="Prieur D."/>
            <person name="Querellou J."/>
            <person name="Ripp R."/>
            <person name="Thierry J.-C."/>
            <person name="Van der Oost J."/>
            <person name="Weissenbach J."/>
            <person name="Zivanovic Y."/>
            <person name="Forterre P."/>
        </authorList>
    </citation>
    <scope>NUCLEOTIDE SEQUENCE [LARGE SCALE GENOMIC DNA]</scope>
    <source>
        <strain>GE5 / Orsay</strain>
    </source>
</reference>
<reference key="2">
    <citation type="journal article" date="2012" name="Curr. Microbiol.">
        <title>Re-annotation of two hyperthermophilic archaea Pyrococcus abyssi GE5 and Pyrococcus furiosus DSM 3638.</title>
        <authorList>
            <person name="Gao J."/>
            <person name="Wang J."/>
        </authorList>
    </citation>
    <scope>GENOME REANNOTATION</scope>
    <source>
        <strain>GE5 / Orsay</strain>
    </source>
</reference>
<comment type="function">
    <text evidence="1">DNA-dependent RNA polymerase (RNAP) catalyzes the transcription of DNA into RNA using the four ribonucleoside triphosphates as substrates.</text>
</comment>
<comment type="catalytic activity">
    <reaction evidence="1">
        <text>RNA(n) + a ribonucleoside 5'-triphosphate = RNA(n+1) + diphosphate</text>
        <dbReference type="Rhea" id="RHEA:21248"/>
        <dbReference type="Rhea" id="RHEA-COMP:14527"/>
        <dbReference type="Rhea" id="RHEA-COMP:17342"/>
        <dbReference type="ChEBI" id="CHEBI:33019"/>
        <dbReference type="ChEBI" id="CHEBI:61557"/>
        <dbReference type="ChEBI" id="CHEBI:140395"/>
        <dbReference type="EC" id="2.7.7.6"/>
    </reaction>
</comment>
<comment type="subunit">
    <text evidence="1">Part of the RNA polymerase complex.</text>
</comment>
<comment type="subcellular location">
    <subcellularLocation>
        <location evidence="1">Cytoplasm</location>
    </subcellularLocation>
</comment>
<comment type="similarity">
    <text evidence="1">Belongs to the archaeal Rpo6/eukaryotic RPB6 RNA polymerase subunit family.</text>
</comment>
<accession>P62014</accession>
<accession>G8ZGP5</accession>
<accession>Q9V193</accession>